<dbReference type="EMBL" id="CP001205">
    <property type="protein sequence ID" value="ACK74777.1"/>
    <property type="molecule type" value="Genomic_DNA"/>
</dbReference>
<dbReference type="RefSeq" id="WP_002557375.1">
    <property type="nucleotide sequence ID" value="NC_011728.1"/>
</dbReference>
<dbReference type="SMR" id="B7J0N2"/>
<dbReference type="KEGG" id="bbz:BbuZS7_0816"/>
<dbReference type="HOGENOM" id="CLU_075939_0_1_12"/>
<dbReference type="Proteomes" id="UP000006901">
    <property type="component" value="Chromosome"/>
</dbReference>
<dbReference type="GO" id="GO:0022625">
    <property type="term" value="C:cytosolic large ribosomal subunit"/>
    <property type="evidence" value="ECO:0007669"/>
    <property type="project" value="TreeGrafter"/>
</dbReference>
<dbReference type="GO" id="GO:0008097">
    <property type="term" value="F:5S rRNA binding"/>
    <property type="evidence" value="ECO:0007669"/>
    <property type="project" value="InterPro"/>
</dbReference>
<dbReference type="GO" id="GO:0003735">
    <property type="term" value="F:structural constituent of ribosome"/>
    <property type="evidence" value="ECO:0007669"/>
    <property type="project" value="InterPro"/>
</dbReference>
<dbReference type="GO" id="GO:0006412">
    <property type="term" value="P:translation"/>
    <property type="evidence" value="ECO:0007669"/>
    <property type="project" value="UniProtKB-UniRule"/>
</dbReference>
<dbReference type="CDD" id="cd00495">
    <property type="entry name" value="Ribosomal_L25_TL5_CTC"/>
    <property type="match status" value="1"/>
</dbReference>
<dbReference type="Gene3D" id="2.170.120.20">
    <property type="entry name" value="Ribosomal protein L25, beta domain"/>
    <property type="match status" value="1"/>
</dbReference>
<dbReference type="Gene3D" id="2.40.240.10">
    <property type="entry name" value="Ribosomal Protein L25, Chain P"/>
    <property type="match status" value="1"/>
</dbReference>
<dbReference type="HAMAP" id="MF_01334">
    <property type="entry name" value="Ribosomal_bL25_CTC"/>
    <property type="match status" value="1"/>
</dbReference>
<dbReference type="InterPro" id="IPR020056">
    <property type="entry name" value="Rbsml_bL25/Gln-tRNA_synth_N"/>
</dbReference>
<dbReference type="InterPro" id="IPR011035">
    <property type="entry name" value="Ribosomal_bL25/Gln-tRNA_synth"/>
</dbReference>
<dbReference type="InterPro" id="IPR020057">
    <property type="entry name" value="Ribosomal_bL25_b-dom"/>
</dbReference>
<dbReference type="InterPro" id="IPR037121">
    <property type="entry name" value="Ribosomal_bL25_C"/>
</dbReference>
<dbReference type="InterPro" id="IPR001021">
    <property type="entry name" value="Ribosomal_bL25_long"/>
</dbReference>
<dbReference type="InterPro" id="IPR029751">
    <property type="entry name" value="Ribosomal_L25_dom"/>
</dbReference>
<dbReference type="InterPro" id="IPR020930">
    <property type="entry name" value="Ribosomal_uL5_bac-type"/>
</dbReference>
<dbReference type="NCBIfam" id="TIGR00731">
    <property type="entry name" value="bL25_bact_ctc"/>
    <property type="match status" value="1"/>
</dbReference>
<dbReference type="NCBIfam" id="NF004135">
    <property type="entry name" value="PRK05618.3-1"/>
    <property type="match status" value="1"/>
</dbReference>
<dbReference type="PANTHER" id="PTHR33284">
    <property type="entry name" value="RIBOSOMAL PROTEIN L25/GLN-TRNA SYNTHETASE, ANTI-CODON-BINDING DOMAIN-CONTAINING PROTEIN"/>
    <property type="match status" value="1"/>
</dbReference>
<dbReference type="PANTHER" id="PTHR33284:SF1">
    <property type="entry name" value="RIBOSOMAL PROTEIN L25_GLN-TRNA SYNTHETASE, ANTI-CODON-BINDING DOMAIN-CONTAINING PROTEIN"/>
    <property type="match status" value="1"/>
</dbReference>
<dbReference type="Pfam" id="PF01386">
    <property type="entry name" value="Ribosomal_L25p"/>
    <property type="match status" value="1"/>
</dbReference>
<dbReference type="Pfam" id="PF14693">
    <property type="entry name" value="Ribosomal_TL5_C"/>
    <property type="match status" value="1"/>
</dbReference>
<dbReference type="SUPFAM" id="SSF50715">
    <property type="entry name" value="Ribosomal protein L25-like"/>
    <property type="match status" value="1"/>
</dbReference>
<gene>
    <name evidence="1" type="primary">rplY</name>
    <name evidence="1" type="synonym">ctc</name>
    <name type="ordered locus">BbuZS7_0816</name>
</gene>
<protein>
    <recommendedName>
        <fullName evidence="1">Large ribosomal subunit protein bL25</fullName>
    </recommendedName>
    <alternativeName>
        <fullName evidence="2">50S ribosomal protein L25</fullName>
    </alternativeName>
    <alternativeName>
        <fullName evidence="1">General stress protein CTC</fullName>
    </alternativeName>
</protein>
<sequence length="182" mass="20478">MENSRVLSCQYRSSFGSSNARRIRAKSEIPAVVYGQGKDVSHLRIKSSEFNKKFAKFTDNTVLILDDGKLERCVFVKDVAENIASKLIYHIDFYEVDRNVELEKYVPIKLIGASIGVKEGGILTVLKEQVKVRSLPLDLPEFIELDLTPVNKGDSVLLKDLVLPSNVRLAENDENLEVVIIK</sequence>
<organism>
    <name type="scientific">Borreliella burgdorferi (strain ZS7)</name>
    <name type="common">Borrelia burgdorferi</name>
    <dbReference type="NCBI Taxonomy" id="445985"/>
    <lineage>
        <taxon>Bacteria</taxon>
        <taxon>Pseudomonadati</taxon>
        <taxon>Spirochaetota</taxon>
        <taxon>Spirochaetia</taxon>
        <taxon>Spirochaetales</taxon>
        <taxon>Borreliaceae</taxon>
        <taxon>Borreliella</taxon>
    </lineage>
</organism>
<comment type="function">
    <text evidence="1">This is one of the proteins that binds to the 5S RNA in the ribosome where it forms part of the central protuberance.</text>
</comment>
<comment type="subunit">
    <text evidence="1">Part of the 50S ribosomal subunit; part of the 5S rRNA/L5/L18/L25 subcomplex. Contacts the 5S rRNA. Binds to the 5S rRNA independently of L5 and L18.</text>
</comment>
<comment type="similarity">
    <text evidence="1">Belongs to the bacterial ribosomal protein bL25 family. CTC subfamily.</text>
</comment>
<keyword id="KW-0687">Ribonucleoprotein</keyword>
<keyword id="KW-0689">Ribosomal protein</keyword>
<keyword id="KW-0694">RNA-binding</keyword>
<keyword id="KW-0699">rRNA-binding</keyword>
<name>RL25_BORBZ</name>
<proteinExistence type="inferred from homology"/>
<reference key="1">
    <citation type="journal article" date="2011" name="J. Bacteriol.">
        <title>Whole-genome sequences of thirteen isolates of Borrelia burgdorferi.</title>
        <authorList>
            <person name="Schutzer S.E."/>
            <person name="Fraser-Liggett C.M."/>
            <person name="Casjens S.R."/>
            <person name="Qiu W.G."/>
            <person name="Dunn J.J."/>
            <person name="Mongodin E.F."/>
            <person name="Luft B.J."/>
        </authorList>
    </citation>
    <scope>NUCLEOTIDE SEQUENCE [LARGE SCALE GENOMIC DNA]</scope>
    <source>
        <strain>ZS7</strain>
    </source>
</reference>
<feature type="chain" id="PRO_1000142489" description="Large ribosomal subunit protein bL25">
    <location>
        <begin position="1"/>
        <end position="182"/>
    </location>
</feature>
<accession>B7J0N2</accession>
<evidence type="ECO:0000255" key="1">
    <source>
        <dbReference type="HAMAP-Rule" id="MF_01334"/>
    </source>
</evidence>
<evidence type="ECO:0000305" key="2"/>